<dbReference type="EMBL" id="AE006468">
    <property type="protein sequence ID" value="AAL20422.1"/>
    <property type="molecule type" value="Genomic_DNA"/>
</dbReference>
<dbReference type="RefSeq" id="NP_460463.1">
    <property type="nucleotide sequence ID" value="NC_003197.2"/>
</dbReference>
<dbReference type="RefSeq" id="WP_001066440.1">
    <property type="nucleotide sequence ID" value="NC_003197.2"/>
</dbReference>
<dbReference type="STRING" id="99287.STM1503"/>
<dbReference type="PaxDb" id="99287-STM1503"/>
<dbReference type="DNASU" id="1253021"/>
<dbReference type="GeneID" id="1253021"/>
<dbReference type="KEGG" id="stm:STM1503"/>
<dbReference type="PATRIC" id="fig|99287.12.peg.1588"/>
<dbReference type="HOGENOM" id="CLU_167574_0_0_6"/>
<dbReference type="OMA" id="EPNTERC"/>
<dbReference type="PhylomeDB" id="Q7CQJ7"/>
<dbReference type="BioCyc" id="SENT99287:STM1503-MONOMER"/>
<dbReference type="Proteomes" id="UP000001014">
    <property type="component" value="Chromosome"/>
</dbReference>
<dbReference type="HAMAP" id="MF_01581">
    <property type="entry name" value="UPF0482"/>
    <property type="match status" value="1"/>
</dbReference>
<dbReference type="InterPro" id="IPR009700">
    <property type="entry name" value="DUF1283"/>
</dbReference>
<dbReference type="NCBIfam" id="NF010180">
    <property type="entry name" value="PRK13659.1"/>
    <property type="match status" value="1"/>
</dbReference>
<dbReference type="Pfam" id="PF06932">
    <property type="entry name" value="DUF1283"/>
    <property type="match status" value="1"/>
</dbReference>
<feature type="signal peptide" evidence="1">
    <location>
        <begin position="1"/>
        <end position="28"/>
    </location>
</feature>
<feature type="chain" id="PRO_0000300229" description="UPF0482 protein YnfB">
    <location>
        <begin position="29"/>
        <end position="113"/>
    </location>
</feature>
<keyword id="KW-1185">Reference proteome</keyword>
<keyword id="KW-0732">Signal</keyword>
<comment type="similarity">
    <text evidence="1">Belongs to the UPF0482 family.</text>
</comment>
<evidence type="ECO:0000255" key="1">
    <source>
        <dbReference type="HAMAP-Rule" id="MF_01581"/>
    </source>
</evidence>
<proteinExistence type="inferred from homology"/>
<accession>Q7CQJ7</accession>
<sequence>MNNTLSKRLCLTAMLTLAAVVYTTSAFAETSKLVIESGDSAQSRQEAAMEKEQWNDTRSLRQKVNTRAEKEWDKADAAFDNRDKCEQSANINAYWEPNTLRCLDRRTGRVITP</sequence>
<reference key="1">
    <citation type="journal article" date="2001" name="Nature">
        <title>Complete genome sequence of Salmonella enterica serovar Typhimurium LT2.</title>
        <authorList>
            <person name="McClelland M."/>
            <person name="Sanderson K.E."/>
            <person name="Spieth J."/>
            <person name="Clifton S.W."/>
            <person name="Latreille P."/>
            <person name="Courtney L."/>
            <person name="Porwollik S."/>
            <person name="Ali J."/>
            <person name="Dante M."/>
            <person name="Du F."/>
            <person name="Hou S."/>
            <person name="Layman D."/>
            <person name="Leonard S."/>
            <person name="Nguyen C."/>
            <person name="Scott K."/>
            <person name="Holmes A."/>
            <person name="Grewal N."/>
            <person name="Mulvaney E."/>
            <person name="Ryan E."/>
            <person name="Sun H."/>
            <person name="Florea L."/>
            <person name="Miller W."/>
            <person name="Stoneking T."/>
            <person name="Nhan M."/>
            <person name="Waterston R."/>
            <person name="Wilson R.K."/>
        </authorList>
    </citation>
    <scope>NUCLEOTIDE SEQUENCE [LARGE SCALE GENOMIC DNA]</scope>
    <source>
        <strain>LT2 / SGSC1412 / ATCC 700720</strain>
    </source>
</reference>
<gene>
    <name evidence="1" type="primary">ynfB</name>
    <name type="ordered locus">STM1503</name>
</gene>
<organism>
    <name type="scientific">Salmonella typhimurium (strain LT2 / SGSC1412 / ATCC 700720)</name>
    <dbReference type="NCBI Taxonomy" id="99287"/>
    <lineage>
        <taxon>Bacteria</taxon>
        <taxon>Pseudomonadati</taxon>
        <taxon>Pseudomonadota</taxon>
        <taxon>Gammaproteobacteria</taxon>
        <taxon>Enterobacterales</taxon>
        <taxon>Enterobacteriaceae</taxon>
        <taxon>Salmonella</taxon>
    </lineage>
</organism>
<name>YNFB_SALTY</name>
<protein>
    <recommendedName>
        <fullName evidence="1">UPF0482 protein YnfB</fullName>
    </recommendedName>
</protein>